<comment type="catalytic activity">
    <reaction evidence="1">
        <text>tRNA(Cys) + L-cysteine + ATP = L-cysteinyl-tRNA(Cys) + AMP + diphosphate</text>
        <dbReference type="Rhea" id="RHEA:17773"/>
        <dbReference type="Rhea" id="RHEA-COMP:9661"/>
        <dbReference type="Rhea" id="RHEA-COMP:9679"/>
        <dbReference type="ChEBI" id="CHEBI:30616"/>
        <dbReference type="ChEBI" id="CHEBI:33019"/>
        <dbReference type="ChEBI" id="CHEBI:35235"/>
        <dbReference type="ChEBI" id="CHEBI:78442"/>
        <dbReference type="ChEBI" id="CHEBI:78517"/>
        <dbReference type="ChEBI" id="CHEBI:456215"/>
        <dbReference type="EC" id="6.1.1.16"/>
    </reaction>
</comment>
<comment type="cofactor">
    <cofactor evidence="1">
        <name>Zn(2+)</name>
        <dbReference type="ChEBI" id="CHEBI:29105"/>
    </cofactor>
    <text evidence="1">Binds 1 zinc ion per subunit.</text>
</comment>
<comment type="subunit">
    <text evidence="1">Monomer.</text>
</comment>
<comment type="subcellular location">
    <subcellularLocation>
        <location evidence="1">Cytoplasm</location>
    </subcellularLocation>
</comment>
<comment type="similarity">
    <text evidence="1">Belongs to the class-I aminoacyl-tRNA synthetase family.</text>
</comment>
<protein>
    <recommendedName>
        <fullName evidence="1">Cysteine--tRNA ligase</fullName>
        <ecNumber evidence="1">6.1.1.16</ecNumber>
    </recommendedName>
    <alternativeName>
        <fullName evidence="1">Cysteinyl-tRNA synthetase</fullName>
        <shortName evidence="1">CysRS</shortName>
    </alternativeName>
</protein>
<feature type="chain" id="PRO_0000332779" description="Cysteine--tRNA ligase">
    <location>
        <begin position="1"/>
        <end position="458"/>
    </location>
</feature>
<feature type="short sequence motif" description="'HIGH' region">
    <location>
        <begin position="31"/>
        <end position="41"/>
    </location>
</feature>
<feature type="short sequence motif" description="'KMSKS' region">
    <location>
        <begin position="270"/>
        <end position="274"/>
    </location>
</feature>
<feature type="binding site" evidence="1">
    <location>
        <position position="29"/>
    </location>
    <ligand>
        <name>Zn(2+)</name>
        <dbReference type="ChEBI" id="CHEBI:29105"/>
    </ligand>
</feature>
<feature type="binding site" evidence="1">
    <location>
        <position position="213"/>
    </location>
    <ligand>
        <name>Zn(2+)</name>
        <dbReference type="ChEBI" id="CHEBI:29105"/>
    </ligand>
</feature>
<feature type="binding site" evidence="1">
    <location>
        <position position="238"/>
    </location>
    <ligand>
        <name>Zn(2+)</name>
        <dbReference type="ChEBI" id="CHEBI:29105"/>
    </ligand>
</feature>
<feature type="binding site" evidence="1">
    <location>
        <position position="242"/>
    </location>
    <ligand>
        <name>Zn(2+)</name>
        <dbReference type="ChEBI" id="CHEBI:29105"/>
    </ligand>
</feature>
<feature type="binding site" evidence="1">
    <location>
        <position position="273"/>
    </location>
    <ligand>
        <name>ATP</name>
        <dbReference type="ChEBI" id="CHEBI:30616"/>
    </ligand>
</feature>
<sequence>MSLRIYNTLSRALEEFSPLEPGHVRMYVCGMTVYDLCHLGHARSMIAFDVVQRWLRASGLAVTYVRNITDIDDKIIKRAVENGETIRSLTDRMIDALHQDADALGIERPTHEPRATAYVPQMLDMIGTLQGKGLAYQAGNGDVNYAVRKFPGYGKLSGKSLDELNAGERVAVQDGKHDPLDFVLWKSAKPEEPADVKWRSPFGEGRPGWHIECSAMGCALLGESFDIHGGGADLQFPHHENEIAQSEGATGKPFARLWMHNGFINVDNEKMSKSLGNFFTIRDVLKEYDAETVRFFVVRSHYRSPLNYSNVHLDDARAALKRLYTALSLVAPAPVEVDWAEGYAARFKAAMDEDFGTPEAVAVLFDLAGEVNRSKSPAAAGLLKALGGHLGLLQADPQDFLKAGAGLDEAAIQAQIAARATAKAAKNFAEADRIRNDLLAQGIVLKDSASGTTWEAAQ</sequence>
<accession>A1W6E1</accession>
<reference key="1">
    <citation type="submission" date="2006-12" db="EMBL/GenBank/DDBJ databases">
        <title>Complete sequence of chromosome 1 of Acidovorax sp. JS42.</title>
        <authorList>
            <person name="Copeland A."/>
            <person name="Lucas S."/>
            <person name="Lapidus A."/>
            <person name="Barry K."/>
            <person name="Detter J.C."/>
            <person name="Glavina del Rio T."/>
            <person name="Dalin E."/>
            <person name="Tice H."/>
            <person name="Pitluck S."/>
            <person name="Chertkov O."/>
            <person name="Brettin T."/>
            <person name="Bruce D."/>
            <person name="Han C."/>
            <person name="Tapia R."/>
            <person name="Gilna P."/>
            <person name="Schmutz J."/>
            <person name="Larimer F."/>
            <person name="Land M."/>
            <person name="Hauser L."/>
            <person name="Kyrpides N."/>
            <person name="Kim E."/>
            <person name="Stahl D."/>
            <person name="Richardson P."/>
        </authorList>
    </citation>
    <scope>NUCLEOTIDE SEQUENCE [LARGE SCALE GENOMIC DNA]</scope>
    <source>
        <strain>JS42</strain>
    </source>
</reference>
<gene>
    <name evidence="1" type="primary">cysS</name>
    <name type="ordered locus">Ajs_1623</name>
</gene>
<name>SYC_ACISJ</name>
<dbReference type="EC" id="6.1.1.16" evidence="1"/>
<dbReference type="EMBL" id="CP000539">
    <property type="protein sequence ID" value="ABM41816.1"/>
    <property type="molecule type" value="Genomic_DNA"/>
</dbReference>
<dbReference type="SMR" id="A1W6E1"/>
<dbReference type="STRING" id="232721.Ajs_1623"/>
<dbReference type="KEGG" id="ajs:Ajs_1623"/>
<dbReference type="eggNOG" id="COG0215">
    <property type="taxonomic scope" value="Bacteria"/>
</dbReference>
<dbReference type="HOGENOM" id="CLU_013528_0_1_4"/>
<dbReference type="Proteomes" id="UP000000645">
    <property type="component" value="Chromosome"/>
</dbReference>
<dbReference type="GO" id="GO:0005829">
    <property type="term" value="C:cytosol"/>
    <property type="evidence" value="ECO:0007669"/>
    <property type="project" value="TreeGrafter"/>
</dbReference>
<dbReference type="GO" id="GO:0005524">
    <property type="term" value="F:ATP binding"/>
    <property type="evidence" value="ECO:0007669"/>
    <property type="project" value="UniProtKB-UniRule"/>
</dbReference>
<dbReference type="GO" id="GO:0004817">
    <property type="term" value="F:cysteine-tRNA ligase activity"/>
    <property type="evidence" value="ECO:0007669"/>
    <property type="project" value="UniProtKB-UniRule"/>
</dbReference>
<dbReference type="GO" id="GO:0008270">
    <property type="term" value="F:zinc ion binding"/>
    <property type="evidence" value="ECO:0007669"/>
    <property type="project" value="UniProtKB-UniRule"/>
</dbReference>
<dbReference type="GO" id="GO:0006423">
    <property type="term" value="P:cysteinyl-tRNA aminoacylation"/>
    <property type="evidence" value="ECO:0007669"/>
    <property type="project" value="UniProtKB-UniRule"/>
</dbReference>
<dbReference type="CDD" id="cd07963">
    <property type="entry name" value="Anticodon_Ia_Cys"/>
    <property type="match status" value="1"/>
</dbReference>
<dbReference type="CDD" id="cd00672">
    <property type="entry name" value="CysRS_core"/>
    <property type="match status" value="1"/>
</dbReference>
<dbReference type="FunFam" id="3.40.50.620:FF:000009">
    <property type="entry name" value="Cysteine--tRNA ligase"/>
    <property type="match status" value="1"/>
</dbReference>
<dbReference type="Gene3D" id="1.20.120.1910">
    <property type="entry name" value="Cysteine-tRNA ligase, C-terminal anti-codon recognition domain"/>
    <property type="match status" value="1"/>
</dbReference>
<dbReference type="Gene3D" id="3.40.50.620">
    <property type="entry name" value="HUPs"/>
    <property type="match status" value="1"/>
</dbReference>
<dbReference type="HAMAP" id="MF_00041">
    <property type="entry name" value="Cys_tRNA_synth"/>
    <property type="match status" value="1"/>
</dbReference>
<dbReference type="InterPro" id="IPR015803">
    <property type="entry name" value="Cys-tRNA-ligase"/>
</dbReference>
<dbReference type="InterPro" id="IPR015273">
    <property type="entry name" value="Cys-tRNA-synt_Ia_DALR"/>
</dbReference>
<dbReference type="InterPro" id="IPR024909">
    <property type="entry name" value="Cys-tRNA/MSH_ligase"/>
</dbReference>
<dbReference type="InterPro" id="IPR056411">
    <property type="entry name" value="CysS_C"/>
</dbReference>
<dbReference type="InterPro" id="IPR014729">
    <property type="entry name" value="Rossmann-like_a/b/a_fold"/>
</dbReference>
<dbReference type="InterPro" id="IPR032678">
    <property type="entry name" value="tRNA-synt_1_cat_dom"/>
</dbReference>
<dbReference type="InterPro" id="IPR009080">
    <property type="entry name" value="tRNAsynth_Ia_anticodon-bd"/>
</dbReference>
<dbReference type="NCBIfam" id="TIGR00435">
    <property type="entry name" value="cysS"/>
    <property type="match status" value="1"/>
</dbReference>
<dbReference type="PANTHER" id="PTHR10890:SF3">
    <property type="entry name" value="CYSTEINE--TRNA LIGASE, CYTOPLASMIC"/>
    <property type="match status" value="1"/>
</dbReference>
<dbReference type="PANTHER" id="PTHR10890">
    <property type="entry name" value="CYSTEINYL-TRNA SYNTHETASE"/>
    <property type="match status" value="1"/>
</dbReference>
<dbReference type="Pfam" id="PF23493">
    <property type="entry name" value="CysS_C"/>
    <property type="match status" value="1"/>
</dbReference>
<dbReference type="Pfam" id="PF09190">
    <property type="entry name" value="DALR_2"/>
    <property type="match status" value="1"/>
</dbReference>
<dbReference type="Pfam" id="PF01406">
    <property type="entry name" value="tRNA-synt_1e"/>
    <property type="match status" value="1"/>
</dbReference>
<dbReference type="PRINTS" id="PR00983">
    <property type="entry name" value="TRNASYNTHCYS"/>
</dbReference>
<dbReference type="SMART" id="SM00840">
    <property type="entry name" value="DALR_2"/>
    <property type="match status" value="1"/>
</dbReference>
<dbReference type="SUPFAM" id="SSF47323">
    <property type="entry name" value="Anticodon-binding domain of a subclass of class I aminoacyl-tRNA synthetases"/>
    <property type="match status" value="1"/>
</dbReference>
<dbReference type="SUPFAM" id="SSF52374">
    <property type="entry name" value="Nucleotidylyl transferase"/>
    <property type="match status" value="1"/>
</dbReference>
<proteinExistence type="inferred from homology"/>
<evidence type="ECO:0000255" key="1">
    <source>
        <dbReference type="HAMAP-Rule" id="MF_00041"/>
    </source>
</evidence>
<organism>
    <name type="scientific">Acidovorax sp. (strain JS42)</name>
    <dbReference type="NCBI Taxonomy" id="232721"/>
    <lineage>
        <taxon>Bacteria</taxon>
        <taxon>Pseudomonadati</taxon>
        <taxon>Pseudomonadota</taxon>
        <taxon>Betaproteobacteria</taxon>
        <taxon>Burkholderiales</taxon>
        <taxon>Comamonadaceae</taxon>
        <taxon>Acidovorax</taxon>
    </lineage>
</organism>
<keyword id="KW-0030">Aminoacyl-tRNA synthetase</keyword>
<keyword id="KW-0067">ATP-binding</keyword>
<keyword id="KW-0963">Cytoplasm</keyword>
<keyword id="KW-0436">Ligase</keyword>
<keyword id="KW-0479">Metal-binding</keyword>
<keyword id="KW-0547">Nucleotide-binding</keyword>
<keyword id="KW-0648">Protein biosynthesis</keyword>
<keyword id="KW-0862">Zinc</keyword>